<feature type="chain" id="PRO_0000455687" description="Cytochrome P450 monooxygenase tenB">
    <location>
        <begin position="1"/>
        <end position="544"/>
    </location>
</feature>
<feature type="transmembrane region" description="Helical" evidence="2">
    <location>
        <begin position="13"/>
        <end position="33"/>
    </location>
</feature>
<feature type="region of interest" description="Disordered" evidence="3">
    <location>
        <begin position="438"/>
        <end position="467"/>
    </location>
</feature>
<feature type="compositionally biased region" description="Basic and acidic residues" evidence="3">
    <location>
        <begin position="438"/>
        <end position="448"/>
    </location>
</feature>
<feature type="binding site" description="axial binding residue" evidence="1">
    <location>
        <position position="486"/>
    </location>
    <ligand>
        <name>heme</name>
        <dbReference type="ChEBI" id="CHEBI:30413"/>
    </ligand>
    <ligandPart>
        <name>Fe</name>
        <dbReference type="ChEBI" id="CHEBI:18248"/>
    </ligandPart>
</feature>
<evidence type="ECO:0000250" key="1">
    <source>
        <dbReference type="UniProtKB" id="P04798"/>
    </source>
</evidence>
<evidence type="ECO:0000255" key="2"/>
<evidence type="ECO:0000256" key="3">
    <source>
        <dbReference type="SAM" id="MobiDB-lite"/>
    </source>
</evidence>
<evidence type="ECO:0000269" key="4">
    <source>
    </source>
</evidence>
<evidence type="ECO:0000269" key="5">
    <source>
    </source>
</evidence>
<evidence type="ECO:0000269" key="6">
    <source>
    </source>
</evidence>
<evidence type="ECO:0000269" key="7">
    <source>
    </source>
</evidence>
<evidence type="ECO:0000303" key="8">
    <source>
    </source>
</evidence>
<evidence type="ECO:0000305" key="9"/>
<dbReference type="EC" id="1.-.-.-" evidence="5"/>
<dbReference type="EMBL" id="JH725173">
    <property type="protein sequence ID" value="EJP63692.1"/>
    <property type="status" value="ALT_SEQ"/>
    <property type="molecule type" value="Genomic_DNA"/>
</dbReference>
<dbReference type="RefSeq" id="XP_008600655.1">
    <property type="nucleotide sequence ID" value="XM_008602433.1"/>
</dbReference>
<dbReference type="SMR" id="J4UJ10"/>
<dbReference type="STRING" id="655819.J4UJ10"/>
<dbReference type="GeneID" id="19890348"/>
<dbReference type="HOGENOM" id="CLU_022195_9_0_1"/>
<dbReference type="InParanoid" id="J4UJ10"/>
<dbReference type="OrthoDB" id="4674at474943"/>
<dbReference type="Proteomes" id="UP000002762">
    <property type="component" value="Unassembled WGS sequence"/>
</dbReference>
<dbReference type="GO" id="GO:0016020">
    <property type="term" value="C:membrane"/>
    <property type="evidence" value="ECO:0007669"/>
    <property type="project" value="UniProtKB-SubCell"/>
</dbReference>
<dbReference type="GO" id="GO:0020037">
    <property type="term" value="F:heme binding"/>
    <property type="evidence" value="ECO:0007669"/>
    <property type="project" value="InterPro"/>
</dbReference>
<dbReference type="GO" id="GO:0005506">
    <property type="term" value="F:iron ion binding"/>
    <property type="evidence" value="ECO:0007669"/>
    <property type="project" value="InterPro"/>
</dbReference>
<dbReference type="GO" id="GO:0004497">
    <property type="term" value="F:monooxygenase activity"/>
    <property type="evidence" value="ECO:0007669"/>
    <property type="project" value="UniProtKB-KW"/>
</dbReference>
<dbReference type="GO" id="GO:0016705">
    <property type="term" value="F:oxidoreductase activity, acting on paired donors, with incorporation or reduction of molecular oxygen"/>
    <property type="evidence" value="ECO:0007669"/>
    <property type="project" value="InterPro"/>
</dbReference>
<dbReference type="GO" id="GO:0019748">
    <property type="term" value="P:secondary metabolic process"/>
    <property type="evidence" value="ECO:0007669"/>
    <property type="project" value="UniProtKB-ARBA"/>
</dbReference>
<dbReference type="CDD" id="cd11041">
    <property type="entry name" value="CYP503A1-like"/>
    <property type="match status" value="1"/>
</dbReference>
<dbReference type="Gene3D" id="1.10.630.10">
    <property type="entry name" value="Cytochrome P450"/>
    <property type="match status" value="1"/>
</dbReference>
<dbReference type="InterPro" id="IPR001128">
    <property type="entry name" value="Cyt_P450"/>
</dbReference>
<dbReference type="InterPro" id="IPR017972">
    <property type="entry name" value="Cyt_P450_CS"/>
</dbReference>
<dbReference type="InterPro" id="IPR002403">
    <property type="entry name" value="Cyt_P450_E_grp-IV"/>
</dbReference>
<dbReference type="InterPro" id="IPR036396">
    <property type="entry name" value="Cyt_P450_sf"/>
</dbReference>
<dbReference type="PANTHER" id="PTHR46206">
    <property type="entry name" value="CYTOCHROME P450"/>
    <property type="match status" value="1"/>
</dbReference>
<dbReference type="PANTHER" id="PTHR46206:SF1">
    <property type="entry name" value="P450, PUTATIVE (EUROFUNG)-RELATED"/>
    <property type="match status" value="1"/>
</dbReference>
<dbReference type="Pfam" id="PF00067">
    <property type="entry name" value="p450"/>
    <property type="match status" value="1"/>
</dbReference>
<dbReference type="PRINTS" id="PR00465">
    <property type="entry name" value="EP450IV"/>
</dbReference>
<dbReference type="SUPFAM" id="SSF48264">
    <property type="entry name" value="Cytochrome P450"/>
    <property type="match status" value="1"/>
</dbReference>
<dbReference type="PROSITE" id="PS00086">
    <property type="entry name" value="CYTOCHROME_P450"/>
    <property type="match status" value="1"/>
</dbReference>
<gene>
    <name evidence="8" type="primary">tenB</name>
    <name type="ORF">BBA_07336</name>
</gene>
<name>TENB_BEAB2</name>
<protein>
    <recommendedName>
        <fullName evidence="8">Cytochrome P450 monooxygenase tenB</fullName>
        <ecNumber evidence="5">1.-.-.-</ecNumber>
    </recommendedName>
    <alternativeName>
        <fullName evidence="8">Tenellin biosynthesis protein B</fullName>
    </alternativeName>
</protein>
<keyword id="KW-0349">Heme</keyword>
<keyword id="KW-0408">Iron</keyword>
<keyword id="KW-0472">Membrane</keyword>
<keyword id="KW-0479">Metal-binding</keyword>
<keyword id="KW-0503">Monooxygenase</keyword>
<keyword id="KW-0560">Oxidoreductase</keyword>
<keyword id="KW-1185">Reference proteome</keyword>
<keyword id="KW-0812">Transmembrane</keyword>
<keyword id="KW-1133">Transmembrane helix</keyword>
<accession>J4UJ10</accession>
<organism>
    <name type="scientific">Beauveria bassiana (strain ARSEF 2860)</name>
    <name type="common">White muscardine disease fungus</name>
    <name type="synonym">Tritirachium shiotae</name>
    <dbReference type="NCBI Taxonomy" id="655819"/>
    <lineage>
        <taxon>Eukaryota</taxon>
        <taxon>Fungi</taxon>
        <taxon>Dikarya</taxon>
        <taxon>Ascomycota</taxon>
        <taxon>Pezizomycotina</taxon>
        <taxon>Sordariomycetes</taxon>
        <taxon>Hypocreomycetidae</taxon>
        <taxon>Hypocreales</taxon>
        <taxon>Cordycipitaceae</taxon>
        <taxon>Beauveria</taxon>
    </lineage>
</organism>
<reference key="1">
    <citation type="journal article" date="2012" name="Sci. Rep.">
        <title>Genomic perspectives on the evolution of fungal entomopathogenicity in Beauveria bassiana.</title>
        <authorList>
            <person name="Xiao G."/>
            <person name="Ying S.-H."/>
            <person name="Zheng P."/>
            <person name="Wang Z.-L."/>
            <person name="Zhang S."/>
            <person name="Xie X.-Q."/>
            <person name="Shang Y."/>
            <person name="St Leger R.J."/>
            <person name="Zhao G.-P."/>
            <person name="Wang C."/>
            <person name="Feng M.-G."/>
        </authorList>
    </citation>
    <scope>NUCLEOTIDE SEQUENCE [LARGE SCALE GENOMIC DNA]</scope>
    <source>
        <strain>ARSEF 2860</strain>
    </source>
</reference>
<reference key="2">
    <citation type="journal article" date="2007" name="ChemBioChem">
        <title>Biosynthesis of the 2-pyridone tenellin in the insect pathogenic fungus Beauveria bassiana.</title>
        <authorList>
            <person name="Eley K.L."/>
            <person name="Halo L.M."/>
            <person name="Song Z."/>
            <person name="Powles H."/>
            <person name="Cox R.J."/>
            <person name="Bailey A.M."/>
            <person name="Lazarus C.M."/>
            <person name="Simpson T.J."/>
        </authorList>
    </citation>
    <scope>FUNCTION</scope>
    <scope>PATHWAY</scope>
</reference>
<reference key="3">
    <citation type="journal article" date="2008" name="J. Am. Chem. Soc.">
        <title>Late stage oxidations during the biosynthesis of the 2-pyridone tenellin in the entomopathogenic fungus Beauveria bassiana.</title>
        <authorList>
            <person name="Halo L.M."/>
            <person name="Heneghan M.N."/>
            <person name="Yakasai A.A."/>
            <person name="Song Z."/>
            <person name="Williams K."/>
            <person name="Bailey A.M."/>
            <person name="Cox R.J."/>
            <person name="Lazarus C.M."/>
            <person name="Simpson T.J."/>
        </authorList>
    </citation>
    <scope>FUNCTION</scope>
    <scope>DISRUPTION PHENOTYPE</scope>
    <scope>CATALYTIC ACTIVITY</scope>
    <scope>PATHWAY</scope>
</reference>
<reference key="4">
    <citation type="journal article" date="2010" name="ChemBioChem">
        <title>First heterologous reconstruction of a complete functional fungal biosynthetic multigene cluster.</title>
        <authorList>
            <person name="Heneghan M.N."/>
            <person name="Yakasai A.A."/>
            <person name="Halo L.M."/>
            <person name="Song Z."/>
            <person name="Bailey A.M."/>
            <person name="Simpson T.J."/>
            <person name="Cox R.J."/>
            <person name="Lazarus C.M."/>
        </authorList>
    </citation>
    <scope>FUNCTION</scope>
    <scope>PATHWAY</scope>
</reference>
<reference key="5">
    <citation type="journal article" date="2021" name="MBio">
        <title>Inductive production of the iron-chelating 2-pyridones benefits the producing fungus to compete for diverse niches.</title>
        <authorList>
            <person name="Chen B."/>
            <person name="Sun Y."/>
            <person name="Li S."/>
            <person name="Yin Y."/>
            <person name="Wang C."/>
        </authorList>
    </citation>
    <scope>FUNCTION</scope>
    <scope>INDUCTION</scope>
    <scope>DISRUPTION PHENOTYPE</scope>
    <scope>PATHWAY</scope>
</reference>
<sequence length="544" mass="61625">MALSEVLSMVAQLGYYEKVTGILGVVSIILLFWKLNHEPFYPALPLAGEPPQRRWFSLSNRLRYYNDCAALFDEAYHTAYAKKGKAVLVPSMGVHTAMIMPESAMNWAMSQPDDSLSIKKAFSELNQTKYSLGHSRYWEDPWQLDLVKAHLSSILQNLIPQLNEELAAAFSKHLGTDAENWKEIELEVIMRRVIAQATSRFIVGLPLCRDDGYLDLSYKVILGMVTTIWATLPFPDLIRAVTGPLASWQTRRNISRIQEHLEPLYQERISILESRDGQKSDPGPQDLFMMMLRFAQKKRPDEYANLGIMTRRVCAANFVAMHQSTVSVTNLILNIIGSDAEFNTIATLRDEITQVMRGTDAKGCWTKDTFTRMRKCDSVAREAMRLNFPLGTRGSMRTVLKDGLESPEGIKLQKGTTISWLASCAQVDADRFDNPQKFDPFRFSRASKDDDDDDDDDGRSTSSHTKDAFVTTSPQYLPFGHGKHACPGRFMVDLMFKIILAQLLTHYDLGWPEDYQGKQPPSVWQGELSEPPPGARILVKRRKV</sequence>
<comment type="function">
    <text evidence="4 5 6 7">Cytochrome P450 monooxygenase; part of the gene cluster that mediates the biosynthesis of tenellin-type 2-pyridones, iron-chelating compounds involved in iron stress tolerance, competition with the natural competitor fungus Metarhizium robertsii and insect hosts infection (PubMed:17216664, PubMed:19067514, PubMed:20575135, PubMed:34903054). TenB catalyzes the selective N-hydroxylation of the 2-pyridone nitrogen of yield tellinin and 15-hydroxytellenin (15-HT), respectively (PubMed:19067514, PubMed:34903054). The pathway begins with the assembly of the polyketide-amino acid backbone by the hybrid PKS-NRPS tenS with the help of the enoyl reductase tenC. These enzymes catalyze the synthesis of the pyrrolidine-2-dione intermediates pretellinin A, 11-hydropretellenin A, 12-hydropretellenin A, 13-hydropretellenin A, 14-hydropretellenin A, 12-oxopretellenin A and prototellinin D. The cytochrome P450 monooxygenase tenA then catalyzes an oxidative ring expansion of pretenellin A and 14-hydropretellenin A to form the 2-pyridone core, leading to pretenellin B and pyridovericin, respectively. The cytochrome P450 monooxygenase tenB is then required for the selective N-hydroxylation of the 2-pyridone nitrogen of yield tellinin and 15-hydroxytellenin (15-HT), respectively. The UDP-glucosyltransferase GT1 and the methyltransferase MT1, located outside the tenS gene cluster, contribute to the stepwise glycosylation and methylation of 15-HT to obtain the glycoside pyridovericin-N-O-(4-O-methyl-beta-D-glucopyranoside) (PMGP). Additional related compounds such as 1-O-methyl-15-HT, (8Z)-1-O-methyl-15-HT, and O-methyltenellin A are also produced but the enzymes involved in their biosynthesis have still to be determined (PubMed:34903054).</text>
</comment>
<comment type="cofactor">
    <cofactor evidence="1">
        <name>heme</name>
        <dbReference type="ChEBI" id="CHEBI:30413"/>
    </cofactor>
</comment>
<comment type="pathway">
    <text evidence="4 5 6 7">Secondary metabolite biosynthesis.</text>
</comment>
<comment type="subcellular location">
    <subcellularLocation>
        <location evidence="2">Membrane</location>
        <topology evidence="2">Single-pass membrane protein</topology>
    </subcellularLocation>
</comment>
<comment type="induction">
    <text evidence="7">Expression is positively regulated by the cluster-specific transcription factor tenR and is induced during cocultures with the natural competitor fungus Metarhizium robertsii.</text>
</comment>
<comment type="disruption phenotype">
    <text evidence="5 7">Fails to produce tenellin, and accumulates pretenellin B (PubMed:19067514). Also leads to the accumulation of pyridovericin (PubMed:34903054).</text>
</comment>
<comment type="similarity">
    <text evidence="9">Belongs to the cytochrome P450 family.</text>
</comment>
<comment type="sequence caution" evidence="9">
    <conflict type="erroneous gene model prediction">
        <sequence resource="EMBL-CDS" id="EJP63692"/>
    </conflict>
</comment>
<proteinExistence type="evidence at protein level"/>